<keyword id="KW-0067">ATP-binding</keyword>
<keyword id="KW-0460">Magnesium</keyword>
<keyword id="KW-0547">Nucleotide-binding</keyword>
<keyword id="KW-1185">Reference proteome</keyword>
<keyword id="KW-0808">Transferase</keyword>
<keyword id="KW-0819">tRNA processing</keyword>
<reference key="1">
    <citation type="journal article" date="2008" name="BMC Genomics">
        <title>Acidithiobacillus ferrooxidans metabolism: from genome sequence to industrial applications.</title>
        <authorList>
            <person name="Valdes J."/>
            <person name="Pedroso I."/>
            <person name="Quatrini R."/>
            <person name="Dodson R.J."/>
            <person name="Tettelin H."/>
            <person name="Blake R. II"/>
            <person name="Eisen J.A."/>
            <person name="Holmes D.S."/>
        </authorList>
    </citation>
    <scope>NUCLEOTIDE SEQUENCE [LARGE SCALE GENOMIC DNA]</scope>
    <source>
        <strain>ATCC 23270 / DSM 14882 / CIP 104768 / NCIMB 8455</strain>
    </source>
</reference>
<comment type="function">
    <text evidence="1">Catalyzes the transfer of a dimethylallyl group onto the adenine at position 37 in tRNAs that read codons beginning with uridine, leading to the formation of N6-(dimethylallyl)adenosine (i(6)A).</text>
</comment>
<comment type="catalytic activity">
    <reaction evidence="1">
        <text>adenosine(37) in tRNA + dimethylallyl diphosphate = N(6)-dimethylallyladenosine(37) in tRNA + diphosphate</text>
        <dbReference type="Rhea" id="RHEA:26482"/>
        <dbReference type="Rhea" id="RHEA-COMP:10162"/>
        <dbReference type="Rhea" id="RHEA-COMP:10375"/>
        <dbReference type="ChEBI" id="CHEBI:33019"/>
        <dbReference type="ChEBI" id="CHEBI:57623"/>
        <dbReference type="ChEBI" id="CHEBI:74411"/>
        <dbReference type="ChEBI" id="CHEBI:74415"/>
        <dbReference type="EC" id="2.5.1.75"/>
    </reaction>
</comment>
<comment type="cofactor">
    <cofactor evidence="1">
        <name>Mg(2+)</name>
        <dbReference type="ChEBI" id="CHEBI:18420"/>
    </cofactor>
</comment>
<comment type="subunit">
    <text evidence="1">Monomer.</text>
</comment>
<comment type="similarity">
    <text evidence="1">Belongs to the IPP transferase family.</text>
</comment>
<gene>
    <name evidence="1" type="primary">miaA</name>
    <name type="ordered locus">AFE_1928</name>
</gene>
<sequence>MQSWATDGSVFFLGRSRPPLSPRAMIPAIFLMGPTASGKTELAVRLADALPIDIISVDSLLVYRHFDIGSAKPSLALRQQYPHALVDIREPDEPYSAGLFREDALHCIALARERGRIPLLVGGTGLYFRALECGIDTLPPANPALRQSLMALAETAGWPALHQRLATLDPEAAAGIAPHDRQRIQRALEIILGSGQTISGARHWQGTFPGPLYKIILRPPRSWLHQRITQRFDVMLNEGFLDEIADLSARHYAPELPAMRAVGYRQYFTWHDGLCSAAEAYQAALAATRQLAKRQDTWFKRESAHYYLDPSRDDASSLLLQMATRPRQGEVHSIGWDNG</sequence>
<evidence type="ECO:0000255" key="1">
    <source>
        <dbReference type="HAMAP-Rule" id="MF_00185"/>
    </source>
</evidence>
<name>MIAA_ACIF2</name>
<accession>B7JC25</accession>
<dbReference type="EC" id="2.5.1.75" evidence="1"/>
<dbReference type="EMBL" id="CP001219">
    <property type="protein sequence ID" value="ACK80038.1"/>
    <property type="molecule type" value="Genomic_DNA"/>
</dbReference>
<dbReference type="SMR" id="B7JC25"/>
<dbReference type="STRING" id="243159.AFE_1928"/>
<dbReference type="PaxDb" id="243159-AFE_1928"/>
<dbReference type="KEGG" id="afr:AFE_1928"/>
<dbReference type="eggNOG" id="COG0324">
    <property type="taxonomic scope" value="Bacteria"/>
</dbReference>
<dbReference type="HOGENOM" id="CLU_032616_0_1_6"/>
<dbReference type="Proteomes" id="UP000001362">
    <property type="component" value="Chromosome"/>
</dbReference>
<dbReference type="GO" id="GO:0005524">
    <property type="term" value="F:ATP binding"/>
    <property type="evidence" value="ECO:0007669"/>
    <property type="project" value="UniProtKB-UniRule"/>
</dbReference>
<dbReference type="GO" id="GO:0052381">
    <property type="term" value="F:tRNA dimethylallyltransferase activity"/>
    <property type="evidence" value="ECO:0007669"/>
    <property type="project" value="UniProtKB-UniRule"/>
</dbReference>
<dbReference type="GO" id="GO:0006400">
    <property type="term" value="P:tRNA modification"/>
    <property type="evidence" value="ECO:0007669"/>
    <property type="project" value="TreeGrafter"/>
</dbReference>
<dbReference type="Gene3D" id="1.10.20.140">
    <property type="match status" value="1"/>
</dbReference>
<dbReference type="Gene3D" id="3.40.50.300">
    <property type="entry name" value="P-loop containing nucleotide triphosphate hydrolases"/>
    <property type="match status" value="1"/>
</dbReference>
<dbReference type="HAMAP" id="MF_00185">
    <property type="entry name" value="IPP_trans"/>
    <property type="match status" value="1"/>
</dbReference>
<dbReference type="InterPro" id="IPR039657">
    <property type="entry name" value="Dimethylallyltransferase"/>
</dbReference>
<dbReference type="InterPro" id="IPR018022">
    <property type="entry name" value="IPT"/>
</dbReference>
<dbReference type="InterPro" id="IPR027417">
    <property type="entry name" value="P-loop_NTPase"/>
</dbReference>
<dbReference type="NCBIfam" id="TIGR00174">
    <property type="entry name" value="miaA"/>
    <property type="match status" value="1"/>
</dbReference>
<dbReference type="PANTHER" id="PTHR11088">
    <property type="entry name" value="TRNA DIMETHYLALLYLTRANSFERASE"/>
    <property type="match status" value="1"/>
</dbReference>
<dbReference type="PANTHER" id="PTHR11088:SF60">
    <property type="entry name" value="TRNA DIMETHYLALLYLTRANSFERASE"/>
    <property type="match status" value="1"/>
</dbReference>
<dbReference type="Pfam" id="PF01715">
    <property type="entry name" value="IPPT"/>
    <property type="match status" value="1"/>
</dbReference>
<dbReference type="SUPFAM" id="SSF52540">
    <property type="entry name" value="P-loop containing nucleoside triphosphate hydrolases"/>
    <property type="match status" value="2"/>
</dbReference>
<organism>
    <name type="scientific">Acidithiobacillus ferrooxidans (strain ATCC 23270 / DSM 14882 / CIP 104768 / NCIMB 8455)</name>
    <name type="common">Ferrobacillus ferrooxidans (strain ATCC 23270)</name>
    <dbReference type="NCBI Taxonomy" id="243159"/>
    <lineage>
        <taxon>Bacteria</taxon>
        <taxon>Pseudomonadati</taxon>
        <taxon>Pseudomonadota</taxon>
        <taxon>Acidithiobacillia</taxon>
        <taxon>Acidithiobacillales</taxon>
        <taxon>Acidithiobacillaceae</taxon>
        <taxon>Acidithiobacillus</taxon>
    </lineage>
</organism>
<proteinExistence type="inferred from homology"/>
<protein>
    <recommendedName>
        <fullName evidence="1">tRNA dimethylallyltransferase</fullName>
        <ecNumber evidence="1">2.5.1.75</ecNumber>
    </recommendedName>
    <alternativeName>
        <fullName evidence="1">Dimethylallyl diphosphate:tRNA dimethylallyltransferase</fullName>
        <shortName evidence="1">DMAPP:tRNA dimethylallyltransferase</shortName>
        <shortName evidence="1">DMATase</shortName>
    </alternativeName>
    <alternativeName>
        <fullName evidence="1">Isopentenyl-diphosphate:tRNA isopentenyltransferase</fullName>
        <shortName evidence="1">IPP transferase</shortName>
        <shortName evidence="1">IPPT</shortName>
        <shortName evidence="1">IPTase</shortName>
    </alternativeName>
</protein>
<feature type="chain" id="PRO_0000377044" description="tRNA dimethylallyltransferase">
    <location>
        <begin position="1"/>
        <end position="339"/>
    </location>
</feature>
<feature type="region of interest" description="Interaction with substrate tRNA" evidence="1">
    <location>
        <begin position="58"/>
        <end position="61"/>
    </location>
</feature>
<feature type="region of interest" description="Interaction with substrate tRNA" evidence="1">
    <location>
        <begin position="182"/>
        <end position="186"/>
    </location>
</feature>
<feature type="binding site" evidence="1">
    <location>
        <begin position="33"/>
        <end position="40"/>
    </location>
    <ligand>
        <name>ATP</name>
        <dbReference type="ChEBI" id="CHEBI:30616"/>
    </ligand>
</feature>
<feature type="binding site" evidence="1">
    <location>
        <begin position="35"/>
        <end position="40"/>
    </location>
    <ligand>
        <name>substrate</name>
    </ligand>
</feature>
<feature type="site" description="Interaction with substrate tRNA" evidence="1">
    <location>
        <position position="124"/>
    </location>
</feature>
<feature type="site" description="Interaction with substrate tRNA" evidence="1">
    <location>
        <position position="146"/>
    </location>
</feature>